<name>TFEC_PANTR</name>
<dbReference type="EMBL" id="DQ977352">
    <property type="protein sequence ID" value="ABM91968.1"/>
    <property type="molecule type" value="Genomic_DNA"/>
</dbReference>
<dbReference type="RefSeq" id="NP_001074952.1">
    <property type="nucleotide sequence ID" value="NM_001081483.1"/>
</dbReference>
<dbReference type="RefSeq" id="XP_016813554.4">
    <property type="nucleotide sequence ID" value="XM_016958065.4"/>
</dbReference>
<dbReference type="SMR" id="A2T713"/>
<dbReference type="FunCoup" id="A2T713">
    <property type="interactions" value="1886"/>
</dbReference>
<dbReference type="STRING" id="9598.ENSPTRP00000088067"/>
<dbReference type="PaxDb" id="9598-ENSPTRP00000033580"/>
<dbReference type="Ensembl" id="ENSPTRT00000107525.1">
    <property type="protein sequence ID" value="ENSPTRP00000088067.1"/>
    <property type="gene ID" value="ENSPTRG00000047353.1"/>
</dbReference>
<dbReference type="GeneID" id="463668"/>
<dbReference type="KEGG" id="ptr:463668"/>
<dbReference type="CTD" id="22797"/>
<dbReference type="VGNC" id="VGNC:4533">
    <property type="gene designation" value="TFEC"/>
</dbReference>
<dbReference type="eggNOG" id="KOG1318">
    <property type="taxonomic scope" value="Eukaryota"/>
</dbReference>
<dbReference type="GeneTree" id="ENSGT00940000159404"/>
<dbReference type="HOGENOM" id="CLU_031638_0_0_1"/>
<dbReference type="InParanoid" id="A2T713"/>
<dbReference type="OMA" id="NHENEMD"/>
<dbReference type="TreeFam" id="TF317174"/>
<dbReference type="Proteomes" id="UP000002277">
    <property type="component" value="Chromosome 7"/>
</dbReference>
<dbReference type="Bgee" id="ENSPTRG00000047353">
    <property type="expression patterns" value="Expressed in adult mammalian kidney and 15 other cell types or tissues"/>
</dbReference>
<dbReference type="GO" id="GO:0005829">
    <property type="term" value="C:cytosol"/>
    <property type="evidence" value="ECO:0007669"/>
    <property type="project" value="Ensembl"/>
</dbReference>
<dbReference type="GO" id="GO:0005654">
    <property type="term" value="C:nucleoplasm"/>
    <property type="evidence" value="ECO:0007669"/>
    <property type="project" value="Ensembl"/>
</dbReference>
<dbReference type="GO" id="GO:0005634">
    <property type="term" value="C:nucleus"/>
    <property type="evidence" value="ECO:0000318"/>
    <property type="project" value="GO_Central"/>
</dbReference>
<dbReference type="GO" id="GO:0000981">
    <property type="term" value="F:DNA-binding transcription factor activity, RNA polymerase II-specific"/>
    <property type="evidence" value="ECO:0000318"/>
    <property type="project" value="GO_Central"/>
</dbReference>
<dbReference type="GO" id="GO:0001227">
    <property type="term" value="F:DNA-binding transcription repressor activity, RNA polymerase II-specific"/>
    <property type="evidence" value="ECO:0007669"/>
    <property type="project" value="Ensembl"/>
</dbReference>
<dbReference type="GO" id="GO:0046983">
    <property type="term" value="F:protein dimerization activity"/>
    <property type="evidence" value="ECO:0007669"/>
    <property type="project" value="InterPro"/>
</dbReference>
<dbReference type="GO" id="GO:0000978">
    <property type="term" value="F:RNA polymerase II cis-regulatory region sequence-specific DNA binding"/>
    <property type="evidence" value="ECO:0000318"/>
    <property type="project" value="GO_Central"/>
</dbReference>
<dbReference type="GO" id="GO:0034605">
    <property type="term" value="P:cellular response to heat"/>
    <property type="evidence" value="ECO:0007669"/>
    <property type="project" value="Ensembl"/>
</dbReference>
<dbReference type="GO" id="GO:0045944">
    <property type="term" value="P:positive regulation of transcription by RNA polymerase II"/>
    <property type="evidence" value="ECO:0007669"/>
    <property type="project" value="Ensembl"/>
</dbReference>
<dbReference type="GO" id="GO:0006357">
    <property type="term" value="P:regulation of transcription by RNA polymerase II"/>
    <property type="evidence" value="ECO:0000318"/>
    <property type="project" value="GO_Central"/>
</dbReference>
<dbReference type="CDD" id="cd18925">
    <property type="entry name" value="bHLHzip_TFEC"/>
    <property type="match status" value="1"/>
</dbReference>
<dbReference type="FunFam" id="4.10.280.10:FF:000003">
    <property type="entry name" value="microphthalmia-associated transcription factor isoform X1"/>
    <property type="match status" value="1"/>
</dbReference>
<dbReference type="Gene3D" id="4.10.280.10">
    <property type="entry name" value="Helix-loop-helix DNA-binding domain"/>
    <property type="match status" value="1"/>
</dbReference>
<dbReference type="InterPro" id="IPR011598">
    <property type="entry name" value="bHLH_dom"/>
</dbReference>
<dbReference type="InterPro" id="IPR036638">
    <property type="entry name" value="HLH_DNA-bd_sf"/>
</dbReference>
<dbReference type="InterPro" id="IPR021802">
    <property type="entry name" value="MiT/TFE_C"/>
</dbReference>
<dbReference type="PANTHER" id="PTHR45776">
    <property type="entry name" value="MIP04163P"/>
    <property type="match status" value="1"/>
</dbReference>
<dbReference type="PANTHER" id="PTHR45776:SF1">
    <property type="entry name" value="TRANSCRIPTION FACTOR EC"/>
    <property type="match status" value="1"/>
</dbReference>
<dbReference type="Pfam" id="PF11851">
    <property type="entry name" value="DUF3371"/>
    <property type="match status" value="1"/>
</dbReference>
<dbReference type="Pfam" id="PF00010">
    <property type="entry name" value="HLH"/>
    <property type="match status" value="1"/>
</dbReference>
<dbReference type="SMART" id="SM00353">
    <property type="entry name" value="HLH"/>
    <property type="match status" value="1"/>
</dbReference>
<dbReference type="SUPFAM" id="SSF47459">
    <property type="entry name" value="HLH, helix-loop-helix DNA-binding domain"/>
    <property type="match status" value="1"/>
</dbReference>
<dbReference type="PROSITE" id="PS50888">
    <property type="entry name" value="BHLH"/>
    <property type="match status" value="1"/>
</dbReference>
<feature type="chain" id="PRO_0000313566" description="Transcription factor EC">
    <location>
        <begin position="1"/>
        <end position="347"/>
    </location>
</feature>
<feature type="domain" description="bHLH" evidence="2">
    <location>
        <begin position="139"/>
        <end position="192"/>
    </location>
</feature>
<feature type="region of interest" description="Necessary for transcriptional transactivation" evidence="1">
    <location>
        <begin position="1"/>
        <end position="119"/>
    </location>
</feature>
<feature type="region of interest" description="Necessary for transcriptional transactivation" evidence="1">
    <location>
        <begin position="271"/>
        <end position="347"/>
    </location>
</feature>
<feature type="region of interest" description="Disordered" evidence="3">
    <location>
        <begin position="319"/>
        <end position="347"/>
    </location>
</feature>
<feature type="compositionally biased region" description="Low complexity" evidence="3">
    <location>
        <begin position="326"/>
        <end position="341"/>
    </location>
</feature>
<proteinExistence type="inferred from homology"/>
<protein>
    <recommendedName>
        <fullName>Transcription factor EC</fullName>
        <shortName>TFE-C</shortName>
    </recommendedName>
</protein>
<comment type="function">
    <text evidence="1">Transcriptional regulator that acts as a repressor or an activator. Acts as a transcriptional repressor on minimal promoter containing element F (that includes an E-box sequence). Binds to element F in an E-box sequence-specific manner. Acts as a transcriptional transactivator on the proximal promoter region of the tartrate-resistant acid phosphatase (TRAP) E-box containing promoter. Collaborates with MITF in target gene activation. Acts as a transcriptional repressor on minimal promoter containing mu E3 enhancer sequence. Binds to mu E3 DNA sequence of the immunoglobulin heavy-chain gene enhancer. Binds DNA in a homo- or heterodimeric form (By similarity).</text>
</comment>
<comment type="subunit">
    <text evidence="1">Homodimer. Forms heterodimers with MITF and TFE3. Interacts with MITF (By similarity).</text>
</comment>
<comment type="subcellular location">
    <subcellularLocation>
        <location evidence="2">Nucleus</location>
    </subcellularLocation>
</comment>
<comment type="similarity">
    <text evidence="4">Belongs to the MiT/TFE family.</text>
</comment>
<keyword id="KW-0010">Activator</keyword>
<keyword id="KW-0238">DNA-binding</keyword>
<keyword id="KW-0539">Nucleus</keyword>
<keyword id="KW-1185">Reference proteome</keyword>
<keyword id="KW-0678">Repressor</keyword>
<keyword id="KW-0804">Transcription</keyword>
<keyword id="KW-0805">Transcription regulation</keyword>
<evidence type="ECO:0000250" key="1"/>
<evidence type="ECO:0000255" key="2">
    <source>
        <dbReference type="PROSITE-ProRule" id="PRU00981"/>
    </source>
</evidence>
<evidence type="ECO:0000256" key="3">
    <source>
        <dbReference type="SAM" id="MobiDB-lite"/>
    </source>
</evidence>
<evidence type="ECO:0000305" key="4"/>
<gene>
    <name type="primary">TFEC</name>
    <name type="synonym">TCFEC</name>
</gene>
<sequence length="347" mass="38921">MTLDHQIINPTLKWSQPAVPSGGPLVQHAHTTLDSDAGLTENPLTKLLAIGKEDDNAQWHMEDVIEDIIGMESSFKEEGADSPLLMQRTLSGSILDVYSGEQGISPINMGLTSASCPSSLPMKREITETDTRALAKERQKKDNHNLIERRRRYNINYRIKELGTLIPKSNDPDMRWNKGTILKASVEYIKWLQKEQQRARELEHRQKKLEQANRRLLLRIQELEIQARTHGLPTLASLGTVDLGAHVTKQQSHPEQNSVDYCQQLTVSQRPSPEFCDQAIAFSDPLSYFTDLSFSAALKEEQRLDGMLLDDTISPFGTDPLLSATSPAVSKESSRRSSFSSDDGDEL</sequence>
<organism>
    <name type="scientific">Pan troglodytes</name>
    <name type="common">Chimpanzee</name>
    <dbReference type="NCBI Taxonomy" id="9598"/>
    <lineage>
        <taxon>Eukaryota</taxon>
        <taxon>Metazoa</taxon>
        <taxon>Chordata</taxon>
        <taxon>Craniata</taxon>
        <taxon>Vertebrata</taxon>
        <taxon>Euteleostomi</taxon>
        <taxon>Mammalia</taxon>
        <taxon>Eutheria</taxon>
        <taxon>Euarchontoglires</taxon>
        <taxon>Primates</taxon>
        <taxon>Haplorrhini</taxon>
        <taxon>Catarrhini</taxon>
        <taxon>Hominidae</taxon>
        <taxon>Pan</taxon>
    </lineage>
</organism>
<accession>A2T713</accession>
<reference key="1">
    <citation type="submission" date="2006-08" db="EMBL/GenBank/DDBJ databases">
        <title>Positive selection in transcription factor genes on the human lineage.</title>
        <authorList>
            <person name="Nickel G.C."/>
            <person name="Tefft D.L."/>
            <person name="Trevarthen K."/>
            <person name="Funt J."/>
            <person name="Adams M.D."/>
        </authorList>
    </citation>
    <scope>NUCLEOTIDE SEQUENCE [GENOMIC DNA]</scope>
</reference>